<keyword id="KW-1003">Cell membrane</keyword>
<keyword id="KW-0325">Glycoprotein</keyword>
<keyword id="KW-0336">GPI-anchor</keyword>
<keyword id="KW-0449">Lipoprotein</keyword>
<keyword id="KW-0472">Membrane</keyword>
<keyword id="KW-0677">Repeat</keyword>
<keyword id="KW-0732">Signal</keyword>
<feature type="signal peptide">
    <location>
        <begin position="1"/>
        <end position="27"/>
    </location>
</feature>
<feature type="chain" id="PRO_0000022109" description="Procyclic form-specific polypeptide">
    <location>
        <begin position="28"/>
        <end position="93"/>
    </location>
</feature>
<feature type="propeptide" id="PRO_0000022110" description="Removed in mature form" evidence="1">
    <location>
        <begin position="94"/>
        <end position="115"/>
    </location>
</feature>
<feature type="repeat" description="1">
    <location>
        <begin position="59"/>
        <end position="60"/>
    </location>
</feature>
<feature type="repeat" description="2">
    <location>
        <begin position="61"/>
        <end position="62"/>
    </location>
</feature>
<feature type="repeat" description="3">
    <location>
        <begin position="63"/>
        <end position="64"/>
    </location>
</feature>
<feature type="repeat" description="4">
    <location>
        <begin position="65"/>
        <end position="66"/>
    </location>
</feature>
<feature type="repeat" description="5">
    <location>
        <begin position="67"/>
        <end position="68"/>
    </location>
</feature>
<feature type="repeat" description="6">
    <location>
        <begin position="69"/>
        <end position="70"/>
    </location>
</feature>
<feature type="repeat" description="7">
    <location>
        <begin position="71"/>
        <end position="72"/>
    </location>
</feature>
<feature type="repeat" description="8">
    <location>
        <begin position="73"/>
        <end position="74"/>
    </location>
</feature>
<feature type="repeat" description="9">
    <location>
        <begin position="75"/>
        <end position="76"/>
    </location>
</feature>
<feature type="repeat" description="10">
    <location>
        <begin position="77"/>
        <end position="78"/>
    </location>
</feature>
<feature type="repeat" description="11">
    <location>
        <begin position="79"/>
        <end position="80"/>
    </location>
</feature>
<feature type="repeat" description="12">
    <location>
        <begin position="81"/>
        <end position="82"/>
    </location>
</feature>
<feature type="repeat" description="13">
    <location>
        <begin position="83"/>
        <end position="84"/>
    </location>
</feature>
<feature type="repeat" description="14">
    <location>
        <begin position="85"/>
        <end position="86"/>
    </location>
</feature>
<feature type="repeat" description="15">
    <location>
        <begin position="87"/>
        <end position="88"/>
    </location>
</feature>
<feature type="repeat" description="16">
    <location>
        <begin position="89"/>
        <end position="90"/>
    </location>
</feature>
<feature type="repeat" description="17">
    <location>
        <begin position="91"/>
        <end position="92"/>
    </location>
</feature>
<feature type="region of interest" description="Disordered" evidence="2">
    <location>
        <begin position="27"/>
        <end position="97"/>
    </location>
</feature>
<feature type="region of interest" description="17 X 2 AA tandem repeats of [DE]-P">
    <location>
        <begin position="59"/>
        <end position="92"/>
    </location>
</feature>
<feature type="compositionally biased region" description="Basic and acidic residues" evidence="2">
    <location>
        <begin position="31"/>
        <end position="52"/>
    </location>
</feature>
<feature type="compositionally biased region" description="Acidic residues" evidence="2">
    <location>
        <begin position="60"/>
        <end position="90"/>
    </location>
</feature>
<feature type="lipid moiety-binding region" description="GPI-anchor amidated glycine" evidence="1">
    <location>
        <position position="93"/>
    </location>
</feature>
<feature type="glycosylation site" description="N-linked (GlcNAc...) asparagine" evidence="1">
    <location>
        <position position="56"/>
    </location>
</feature>
<comment type="function">
    <text>Major surface antigen of procyclic forms.</text>
</comment>
<comment type="subcellular location">
    <subcellularLocation>
        <location>Cell membrane</location>
        <topology>Lipid-anchor</topology>
        <topology>GPI-anchor</topology>
    </subcellularLocation>
</comment>
<comment type="developmental stage">
    <text>Expressed only at a certain stage during differentiation in the insect vector.</text>
</comment>
<name>PROA_TRYBB</name>
<sequence>MAPRSLYLLAVLLFSANLFAGVGFAAAAEGPEDKGLTKGGKGKGEKGTKVGADDTNGTDPDPEPEPEPEPEPEPEPEPEPEPEPEPEPEPEPGAATLKSVALPFAIAAAALVAAF</sequence>
<accession>P14043</accession>
<evidence type="ECO:0000255" key="1"/>
<evidence type="ECO:0000256" key="2">
    <source>
        <dbReference type="SAM" id="MobiDB-lite"/>
    </source>
</evidence>
<protein>
    <recommendedName>
        <fullName>Procyclic form-specific polypeptide</fullName>
    </recommendedName>
    <alternativeName>
        <fullName>PARP</fullName>
    </alternativeName>
    <alternativeName>
        <fullName>Procyclin</fullName>
    </alternativeName>
</protein>
<reference key="1">
    <citation type="journal article" date="1989" name="Nucleic Acids Res.">
        <title>Duplication and transcription of procyclin genes in Trypanosoma brucei.</title>
        <authorList>
            <person name="Koenig E."/>
            <person name="Delius H."/>
            <person name="Carrington M."/>
            <person name="Williams R.O."/>
            <person name="Roditi I."/>
        </authorList>
    </citation>
    <scope>NUCLEOTIDE SEQUENCE [GENOMIC DNA]</scope>
    <source>
        <strain>227(ILTAT1)</strain>
    </source>
</reference>
<proteinExistence type="evidence at transcript level"/>
<gene>
    <name type="primary">PROA</name>
</gene>
<organism>
    <name type="scientific">Trypanosoma brucei brucei</name>
    <dbReference type="NCBI Taxonomy" id="5702"/>
    <lineage>
        <taxon>Eukaryota</taxon>
        <taxon>Discoba</taxon>
        <taxon>Euglenozoa</taxon>
        <taxon>Kinetoplastea</taxon>
        <taxon>Metakinetoplastina</taxon>
        <taxon>Trypanosomatida</taxon>
        <taxon>Trypanosomatidae</taxon>
        <taxon>Trypanosoma</taxon>
    </lineage>
</organism>
<dbReference type="EMBL" id="X16015">
    <property type="protein sequence ID" value="CAA34147.1"/>
    <property type="molecule type" value="Genomic_DNA"/>
</dbReference>
<dbReference type="PIR" id="S14896">
    <property type="entry name" value="FAUTPC"/>
</dbReference>
<dbReference type="GlyCosmos" id="P14043">
    <property type="glycosylation" value="1 site, No reported glycans"/>
</dbReference>
<dbReference type="GO" id="GO:0005886">
    <property type="term" value="C:plasma membrane"/>
    <property type="evidence" value="ECO:0007669"/>
    <property type="project" value="UniProtKB-SubCell"/>
</dbReference>
<dbReference type="GO" id="GO:0098552">
    <property type="term" value="C:side of membrane"/>
    <property type="evidence" value="ECO:0007669"/>
    <property type="project" value="UniProtKB-KW"/>
</dbReference>
<dbReference type="InterPro" id="IPR008882">
    <property type="entry name" value="Trypano_PARP"/>
</dbReference>
<dbReference type="Pfam" id="PF05887">
    <property type="entry name" value="Trypan_PARP"/>
    <property type="match status" value="1"/>
</dbReference>